<comment type="similarity">
    <text evidence="1">Belongs to the bacterial ribosomal protein bL35 family.</text>
</comment>
<accession>A1JMK4</accession>
<proteinExistence type="inferred from homology"/>
<keyword id="KW-0687">Ribonucleoprotein</keyword>
<keyword id="KW-0689">Ribosomal protein</keyword>
<organism>
    <name type="scientific">Yersinia enterocolitica serotype O:8 / biotype 1B (strain NCTC 13174 / 8081)</name>
    <dbReference type="NCBI Taxonomy" id="393305"/>
    <lineage>
        <taxon>Bacteria</taxon>
        <taxon>Pseudomonadati</taxon>
        <taxon>Pseudomonadota</taxon>
        <taxon>Gammaproteobacteria</taxon>
        <taxon>Enterobacterales</taxon>
        <taxon>Yersiniaceae</taxon>
        <taxon>Yersinia</taxon>
    </lineage>
</organism>
<reference key="1">
    <citation type="journal article" date="2006" name="PLoS Genet.">
        <title>The complete genome sequence and comparative genome analysis of the high pathogenicity Yersinia enterocolitica strain 8081.</title>
        <authorList>
            <person name="Thomson N.R."/>
            <person name="Howard S."/>
            <person name="Wren B.W."/>
            <person name="Holden M.T.G."/>
            <person name="Crossman L."/>
            <person name="Challis G.L."/>
            <person name="Churcher C."/>
            <person name="Mungall K."/>
            <person name="Brooks K."/>
            <person name="Chillingworth T."/>
            <person name="Feltwell T."/>
            <person name="Abdellah Z."/>
            <person name="Hauser H."/>
            <person name="Jagels K."/>
            <person name="Maddison M."/>
            <person name="Moule S."/>
            <person name="Sanders M."/>
            <person name="Whitehead S."/>
            <person name="Quail M.A."/>
            <person name="Dougan G."/>
            <person name="Parkhill J."/>
            <person name="Prentice M.B."/>
        </authorList>
    </citation>
    <scope>NUCLEOTIDE SEQUENCE [LARGE SCALE GENOMIC DNA]</scope>
    <source>
        <strain>NCTC 13174 / 8081</strain>
    </source>
</reference>
<feature type="chain" id="PRO_1000050790" description="Large ribosomal subunit protein bL35">
    <location>
        <begin position="1"/>
        <end position="65"/>
    </location>
</feature>
<sequence>MPKIKTVRGAAKRFKKTGAGGFKRKHANLRHILTKKATKRKRHLRPKGMVSKNDLGLVVACLPYA</sequence>
<gene>
    <name evidence="1" type="primary">rpmI</name>
    <name type="ordered locus">YE1914</name>
</gene>
<protein>
    <recommendedName>
        <fullName evidence="1">Large ribosomal subunit protein bL35</fullName>
    </recommendedName>
    <alternativeName>
        <fullName evidence="2">50S ribosomal protein L35</fullName>
    </alternativeName>
</protein>
<evidence type="ECO:0000255" key="1">
    <source>
        <dbReference type="HAMAP-Rule" id="MF_00514"/>
    </source>
</evidence>
<evidence type="ECO:0000305" key="2"/>
<name>RL35_YERE8</name>
<dbReference type="EMBL" id="AM286415">
    <property type="protein sequence ID" value="CAL11994.1"/>
    <property type="molecule type" value="Genomic_DNA"/>
</dbReference>
<dbReference type="RefSeq" id="WP_004713020.1">
    <property type="nucleotide sequence ID" value="NC_008800.1"/>
</dbReference>
<dbReference type="RefSeq" id="YP_001006172.1">
    <property type="nucleotide sequence ID" value="NC_008800.1"/>
</dbReference>
<dbReference type="SMR" id="A1JMK4"/>
<dbReference type="GeneID" id="93972201"/>
<dbReference type="KEGG" id="yen:YE1914"/>
<dbReference type="PATRIC" id="fig|393305.7.peg.2068"/>
<dbReference type="eggNOG" id="COG0291">
    <property type="taxonomic scope" value="Bacteria"/>
</dbReference>
<dbReference type="HOGENOM" id="CLU_169643_1_1_6"/>
<dbReference type="OrthoDB" id="47476at2"/>
<dbReference type="Proteomes" id="UP000000642">
    <property type="component" value="Chromosome"/>
</dbReference>
<dbReference type="GO" id="GO:0022625">
    <property type="term" value="C:cytosolic large ribosomal subunit"/>
    <property type="evidence" value="ECO:0007669"/>
    <property type="project" value="TreeGrafter"/>
</dbReference>
<dbReference type="GO" id="GO:0003735">
    <property type="term" value="F:structural constituent of ribosome"/>
    <property type="evidence" value="ECO:0007669"/>
    <property type="project" value="InterPro"/>
</dbReference>
<dbReference type="GO" id="GO:0006412">
    <property type="term" value="P:translation"/>
    <property type="evidence" value="ECO:0007669"/>
    <property type="project" value="UniProtKB-UniRule"/>
</dbReference>
<dbReference type="FunFam" id="4.10.410.60:FF:000001">
    <property type="entry name" value="50S ribosomal protein L35"/>
    <property type="match status" value="1"/>
</dbReference>
<dbReference type="Gene3D" id="4.10.410.60">
    <property type="match status" value="1"/>
</dbReference>
<dbReference type="HAMAP" id="MF_00514">
    <property type="entry name" value="Ribosomal_bL35"/>
    <property type="match status" value="1"/>
</dbReference>
<dbReference type="InterPro" id="IPR001706">
    <property type="entry name" value="Ribosomal_bL35"/>
</dbReference>
<dbReference type="InterPro" id="IPR021137">
    <property type="entry name" value="Ribosomal_bL35-like"/>
</dbReference>
<dbReference type="InterPro" id="IPR018265">
    <property type="entry name" value="Ribosomal_bL35_CS"/>
</dbReference>
<dbReference type="InterPro" id="IPR037229">
    <property type="entry name" value="Ribosomal_bL35_sf"/>
</dbReference>
<dbReference type="NCBIfam" id="TIGR00001">
    <property type="entry name" value="rpmI_bact"/>
    <property type="match status" value="1"/>
</dbReference>
<dbReference type="PANTHER" id="PTHR33343">
    <property type="entry name" value="54S RIBOSOMAL PROTEIN BL35M"/>
    <property type="match status" value="1"/>
</dbReference>
<dbReference type="PANTHER" id="PTHR33343:SF1">
    <property type="entry name" value="LARGE RIBOSOMAL SUBUNIT PROTEIN BL35M"/>
    <property type="match status" value="1"/>
</dbReference>
<dbReference type="Pfam" id="PF01632">
    <property type="entry name" value="Ribosomal_L35p"/>
    <property type="match status" value="1"/>
</dbReference>
<dbReference type="PRINTS" id="PR00064">
    <property type="entry name" value="RIBOSOMALL35"/>
</dbReference>
<dbReference type="SUPFAM" id="SSF143034">
    <property type="entry name" value="L35p-like"/>
    <property type="match status" value="1"/>
</dbReference>
<dbReference type="PROSITE" id="PS00936">
    <property type="entry name" value="RIBOSOMAL_L35"/>
    <property type="match status" value="1"/>
</dbReference>